<comment type="function">
    <text evidence="1">Catalyzes the condensation of (S)-aspartate-beta-semialdehyde [(S)-ASA] and pyruvate to 4-hydroxy-tetrahydrodipicolinate (HTPA).</text>
</comment>
<comment type="catalytic activity">
    <reaction evidence="1">
        <text>L-aspartate 4-semialdehyde + pyruvate = (2S,4S)-4-hydroxy-2,3,4,5-tetrahydrodipicolinate + H2O + H(+)</text>
        <dbReference type="Rhea" id="RHEA:34171"/>
        <dbReference type="ChEBI" id="CHEBI:15361"/>
        <dbReference type="ChEBI" id="CHEBI:15377"/>
        <dbReference type="ChEBI" id="CHEBI:15378"/>
        <dbReference type="ChEBI" id="CHEBI:67139"/>
        <dbReference type="ChEBI" id="CHEBI:537519"/>
        <dbReference type="EC" id="4.3.3.7"/>
    </reaction>
</comment>
<comment type="pathway">
    <text evidence="1">Amino-acid biosynthesis; L-lysine biosynthesis via DAP pathway; (S)-tetrahydrodipicolinate from L-aspartate: step 3/4.</text>
</comment>
<comment type="subunit">
    <text evidence="1">Homotetramer; dimer of dimers.</text>
</comment>
<comment type="subcellular location">
    <subcellularLocation>
        <location evidence="1">Cytoplasm</location>
    </subcellularLocation>
</comment>
<comment type="similarity">
    <text evidence="1">Belongs to the DapA family.</text>
</comment>
<comment type="caution">
    <text evidence="2">Was originally thought to be a dihydrodipicolinate synthase (DHDPS), catalyzing the condensation of (S)-aspartate-beta-semialdehyde [(S)-ASA] and pyruvate to dihydrodipicolinate (DHDP). However, it was shown in E.coli that the product of the enzymatic reaction is not dihydrodipicolinate but in fact (4S)-4-hydroxy-2,3,4,5-tetrahydro-(2S)-dipicolinic acid (HTPA), and that the consecutive dehydration reaction leading to DHDP is not spontaneous but catalyzed by DapB.</text>
</comment>
<proteinExistence type="inferred from homology"/>
<accession>C3PH04</accession>
<feature type="chain" id="PRO_1000134863" description="4-hydroxy-tetrahydrodipicolinate synthase">
    <location>
        <begin position="1"/>
        <end position="302"/>
    </location>
</feature>
<feature type="active site" description="Proton donor/acceptor" evidence="1">
    <location>
        <position position="145"/>
    </location>
</feature>
<feature type="active site" description="Schiff-base intermediate with substrate" evidence="1">
    <location>
        <position position="173"/>
    </location>
</feature>
<feature type="binding site" evidence="1">
    <location>
        <position position="57"/>
    </location>
    <ligand>
        <name>pyruvate</name>
        <dbReference type="ChEBI" id="CHEBI:15361"/>
    </ligand>
</feature>
<feature type="binding site" evidence="1">
    <location>
        <position position="213"/>
    </location>
    <ligand>
        <name>pyruvate</name>
        <dbReference type="ChEBI" id="CHEBI:15361"/>
    </ligand>
</feature>
<feature type="site" description="Part of a proton relay during catalysis" evidence="1">
    <location>
        <position position="56"/>
    </location>
</feature>
<feature type="site" description="Part of a proton relay during catalysis" evidence="1">
    <location>
        <position position="119"/>
    </location>
</feature>
<name>DAPA_CORA7</name>
<sequence>MSTGMTAQAGVDTFGRVGVAMVTPFDQDGALDVSAGRRLAAHLVDNGVDSLILAGTTGESPTTSLDEKLELFAAVKEEVGGRAKLCAGAGTNNTATSIEAARAFADAGADSLLVVTPYYSKPSQAGVYAHFTAVADAVDLPVCLYDIPGRSGIPIETETLLRLAEVPNIKAVKDAKGDLVAAAPLIQETGLAWYSGDDGLNLPWLALGASGVISVIGHIAPRALADLYVAFDEGDIARAREINAKTLSPLVEAQGRLGGVTLVKAALRLQGIEVGEPRLPVTAADAEEIEALRHDLEKAGVL</sequence>
<dbReference type="EC" id="4.3.3.7" evidence="1"/>
<dbReference type="EMBL" id="CP001601">
    <property type="protein sequence ID" value="ACP33108.1"/>
    <property type="molecule type" value="Genomic_DNA"/>
</dbReference>
<dbReference type="RefSeq" id="WP_010190305.1">
    <property type="nucleotide sequence ID" value="NC_012590.1"/>
</dbReference>
<dbReference type="SMR" id="C3PH04"/>
<dbReference type="STRING" id="548476.cauri_1515"/>
<dbReference type="GeneID" id="31924144"/>
<dbReference type="KEGG" id="car:cauri_1515"/>
<dbReference type="eggNOG" id="COG0329">
    <property type="taxonomic scope" value="Bacteria"/>
</dbReference>
<dbReference type="HOGENOM" id="CLU_049343_7_1_11"/>
<dbReference type="OrthoDB" id="9782828at2"/>
<dbReference type="UniPathway" id="UPA00034">
    <property type="reaction ID" value="UER00017"/>
</dbReference>
<dbReference type="Proteomes" id="UP000002077">
    <property type="component" value="Chromosome"/>
</dbReference>
<dbReference type="GO" id="GO:0005829">
    <property type="term" value="C:cytosol"/>
    <property type="evidence" value="ECO:0007669"/>
    <property type="project" value="TreeGrafter"/>
</dbReference>
<dbReference type="GO" id="GO:0008840">
    <property type="term" value="F:4-hydroxy-tetrahydrodipicolinate synthase activity"/>
    <property type="evidence" value="ECO:0007669"/>
    <property type="project" value="UniProtKB-UniRule"/>
</dbReference>
<dbReference type="GO" id="GO:0019877">
    <property type="term" value="P:diaminopimelate biosynthetic process"/>
    <property type="evidence" value="ECO:0007669"/>
    <property type="project" value="UniProtKB-UniRule"/>
</dbReference>
<dbReference type="GO" id="GO:0009089">
    <property type="term" value="P:lysine biosynthetic process via diaminopimelate"/>
    <property type="evidence" value="ECO:0007669"/>
    <property type="project" value="UniProtKB-UniRule"/>
</dbReference>
<dbReference type="CDD" id="cd00950">
    <property type="entry name" value="DHDPS"/>
    <property type="match status" value="1"/>
</dbReference>
<dbReference type="Gene3D" id="3.20.20.70">
    <property type="entry name" value="Aldolase class I"/>
    <property type="match status" value="1"/>
</dbReference>
<dbReference type="HAMAP" id="MF_00418">
    <property type="entry name" value="DapA"/>
    <property type="match status" value="1"/>
</dbReference>
<dbReference type="InterPro" id="IPR013785">
    <property type="entry name" value="Aldolase_TIM"/>
</dbReference>
<dbReference type="InterPro" id="IPR005263">
    <property type="entry name" value="DapA"/>
</dbReference>
<dbReference type="InterPro" id="IPR002220">
    <property type="entry name" value="DapA-like"/>
</dbReference>
<dbReference type="InterPro" id="IPR020625">
    <property type="entry name" value="Schiff_base-form_aldolases_AS"/>
</dbReference>
<dbReference type="InterPro" id="IPR020624">
    <property type="entry name" value="Schiff_base-form_aldolases_CS"/>
</dbReference>
<dbReference type="NCBIfam" id="TIGR00674">
    <property type="entry name" value="dapA"/>
    <property type="match status" value="1"/>
</dbReference>
<dbReference type="PANTHER" id="PTHR12128:SF66">
    <property type="entry name" value="4-HYDROXY-2-OXOGLUTARATE ALDOLASE, MITOCHONDRIAL"/>
    <property type="match status" value="1"/>
</dbReference>
<dbReference type="PANTHER" id="PTHR12128">
    <property type="entry name" value="DIHYDRODIPICOLINATE SYNTHASE"/>
    <property type="match status" value="1"/>
</dbReference>
<dbReference type="Pfam" id="PF00701">
    <property type="entry name" value="DHDPS"/>
    <property type="match status" value="1"/>
</dbReference>
<dbReference type="PIRSF" id="PIRSF001365">
    <property type="entry name" value="DHDPS"/>
    <property type="match status" value="1"/>
</dbReference>
<dbReference type="PRINTS" id="PR00146">
    <property type="entry name" value="DHPICSNTHASE"/>
</dbReference>
<dbReference type="SMART" id="SM01130">
    <property type="entry name" value="DHDPS"/>
    <property type="match status" value="1"/>
</dbReference>
<dbReference type="SUPFAM" id="SSF51569">
    <property type="entry name" value="Aldolase"/>
    <property type="match status" value="1"/>
</dbReference>
<dbReference type="PROSITE" id="PS00665">
    <property type="entry name" value="DHDPS_1"/>
    <property type="match status" value="1"/>
</dbReference>
<dbReference type="PROSITE" id="PS00666">
    <property type="entry name" value="DHDPS_2"/>
    <property type="match status" value="1"/>
</dbReference>
<evidence type="ECO:0000255" key="1">
    <source>
        <dbReference type="HAMAP-Rule" id="MF_00418"/>
    </source>
</evidence>
<evidence type="ECO:0000305" key="2"/>
<gene>
    <name evidence="1" type="primary">dapA</name>
    <name type="ordered locus">cauri_1515</name>
</gene>
<reference key="1">
    <citation type="journal article" date="2010" name="BMC Genomics">
        <title>Complete genome sequence and lifestyle of black-pigmented Corynebacterium aurimucosum ATCC 700975 (formerly C. nigricans CN-1) isolated from a vaginal swab of a woman with spontaneous abortion.</title>
        <authorList>
            <person name="Trost E."/>
            <person name="Gotker S."/>
            <person name="Schneider J."/>
            <person name="Schneiker-Bekel S."/>
            <person name="Szczepanowski R."/>
            <person name="Tilker A."/>
            <person name="Viehoever P."/>
            <person name="Arnold W."/>
            <person name="Bekel T."/>
            <person name="Blom J."/>
            <person name="Gartemann K.H."/>
            <person name="Linke B."/>
            <person name="Goesmann A."/>
            <person name="Puhler A."/>
            <person name="Shukla S.K."/>
            <person name="Tauch A."/>
        </authorList>
    </citation>
    <scope>NUCLEOTIDE SEQUENCE [LARGE SCALE GENOMIC DNA]</scope>
    <source>
        <strain>ATCC 700975 / DSM 44827 / CIP 107346 / CN-1</strain>
    </source>
</reference>
<keyword id="KW-0028">Amino-acid biosynthesis</keyword>
<keyword id="KW-0963">Cytoplasm</keyword>
<keyword id="KW-0220">Diaminopimelate biosynthesis</keyword>
<keyword id="KW-0456">Lyase</keyword>
<keyword id="KW-0457">Lysine biosynthesis</keyword>
<keyword id="KW-1185">Reference proteome</keyword>
<keyword id="KW-0704">Schiff base</keyword>
<protein>
    <recommendedName>
        <fullName evidence="1">4-hydroxy-tetrahydrodipicolinate synthase</fullName>
        <shortName evidence="1">HTPA synthase</shortName>
        <ecNumber evidence="1">4.3.3.7</ecNumber>
    </recommendedName>
</protein>
<organism>
    <name type="scientific">Corynebacterium aurimucosum (strain ATCC 700975 / DSM 44827 / CIP 107346 / CN-1)</name>
    <name type="common">Corynebacterium nigricans</name>
    <dbReference type="NCBI Taxonomy" id="548476"/>
    <lineage>
        <taxon>Bacteria</taxon>
        <taxon>Bacillati</taxon>
        <taxon>Actinomycetota</taxon>
        <taxon>Actinomycetes</taxon>
        <taxon>Mycobacteriales</taxon>
        <taxon>Corynebacteriaceae</taxon>
        <taxon>Corynebacterium</taxon>
    </lineage>
</organism>